<gene>
    <name evidence="1" type="primary">trm1</name>
    <name type="ordered locus">TK0970</name>
</gene>
<keyword id="KW-0489">Methyltransferase</keyword>
<keyword id="KW-1185">Reference proteome</keyword>
<keyword id="KW-0694">RNA-binding</keyword>
<keyword id="KW-0949">S-adenosyl-L-methionine</keyword>
<keyword id="KW-0808">Transferase</keyword>
<keyword id="KW-0819">tRNA processing</keyword>
<keyword id="KW-0820">tRNA-binding</keyword>
<comment type="function">
    <text evidence="1">Dimethylates a single guanine residue at position 26 of a number of tRNAs using S-adenosyl-L-methionine as donor of the methyl groups.</text>
</comment>
<comment type="catalytic activity">
    <reaction evidence="1">
        <text>guanosine(26) in tRNA + 2 S-adenosyl-L-methionine = N(2)-dimethylguanosine(26) in tRNA + 2 S-adenosyl-L-homocysteine + 2 H(+)</text>
        <dbReference type="Rhea" id="RHEA:43140"/>
        <dbReference type="Rhea" id="RHEA-COMP:10359"/>
        <dbReference type="Rhea" id="RHEA-COMP:10360"/>
        <dbReference type="ChEBI" id="CHEBI:15378"/>
        <dbReference type="ChEBI" id="CHEBI:57856"/>
        <dbReference type="ChEBI" id="CHEBI:59789"/>
        <dbReference type="ChEBI" id="CHEBI:74269"/>
        <dbReference type="ChEBI" id="CHEBI:74513"/>
        <dbReference type="EC" id="2.1.1.216"/>
    </reaction>
</comment>
<comment type="similarity">
    <text evidence="1">Belongs to the class I-like SAM-binding methyltransferase superfamily. Trm1 family.</text>
</comment>
<reference key="1">
    <citation type="journal article" date="2005" name="Genome Res.">
        <title>Complete genome sequence of the hyperthermophilic archaeon Thermococcus kodakaraensis KOD1 and comparison with Pyrococcus genomes.</title>
        <authorList>
            <person name="Fukui T."/>
            <person name="Atomi H."/>
            <person name="Kanai T."/>
            <person name="Matsumi R."/>
            <person name="Fujiwara S."/>
            <person name="Imanaka T."/>
        </authorList>
    </citation>
    <scope>NUCLEOTIDE SEQUENCE [LARGE SCALE GENOMIC DNA]</scope>
    <source>
        <strain>ATCC BAA-918 / JCM 12380 / KOD1</strain>
    </source>
</reference>
<proteinExistence type="inferred from homology"/>
<protein>
    <recommendedName>
        <fullName evidence="1">tRNA (guanine(26)-N(2))-dimethyltransferase</fullName>
        <ecNumber evidence="1">2.1.1.216</ecNumber>
    </recommendedName>
    <alternativeName>
        <fullName evidence="1">tRNA 2,2-dimethylguanosine-26 methyltransferase</fullName>
    </alternativeName>
    <alternativeName>
        <fullName evidence="1">tRNA(guanine-26,N(2)-N(2)) methyltransferase</fullName>
    </alternativeName>
    <alternativeName>
        <fullName evidence="1">tRNA(m(2,2)G26)dimethyltransferase</fullName>
    </alternativeName>
</protein>
<dbReference type="EC" id="2.1.1.216" evidence="1"/>
<dbReference type="EMBL" id="AP006878">
    <property type="protein sequence ID" value="BAD85159.1"/>
    <property type="molecule type" value="Genomic_DNA"/>
</dbReference>
<dbReference type="RefSeq" id="WP_011249921.1">
    <property type="nucleotide sequence ID" value="NC_006624.1"/>
</dbReference>
<dbReference type="SMR" id="Q5JIB3"/>
<dbReference type="FunCoup" id="Q5JIB3">
    <property type="interactions" value="203"/>
</dbReference>
<dbReference type="IntAct" id="Q5JIB3">
    <property type="interactions" value="1"/>
</dbReference>
<dbReference type="MINT" id="Q5JIB3"/>
<dbReference type="STRING" id="69014.TK0970"/>
<dbReference type="EnsemblBacteria" id="BAD85159">
    <property type="protein sequence ID" value="BAD85159"/>
    <property type="gene ID" value="TK0970"/>
</dbReference>
<dbReference type="GeneID" id="78447483"/>
<dbReference type="KEGG" id="tko:TK0970"/>
<dbReference type="PATRIC" id="fig|69014.16.peg.948"/>
<dbReference type="eggNOG" id="arCOG01219">
    <property type="taxonomic scope" value="Archaea"/>
</dbReference>
<dbReference type="HOGENOM" id="CLU_010862_5_1_2"/>
<dbReference type="InParanoid" id="Q5JIB3"/>
<dbReference type="OrthoDB" id="372177at2157"/>
<dbReference type="PhylomeDB" id="Q5JIB3"/>
<dbReference type="Proteomes" id="UP000000536">
    <property type="component" value="Chromosome"/>
</dbReference>
<dbReference type="GO" id="GO:0160104">
    <property type="term" value="F:tRNA (guanine(26)-N2)-dimethyltransferase activity"/>
    <property type="evidence" value="ECO:0007669"/>
    <property type="project" value="UniProtKB-UniRule"/>
</dbReference>
<dbReference type="GO" id="GO:0000049">
    <property type="term" value="F:tRNA binding"/>
    <property type="evidence" value="ECO:0007669"/>
    <property type="project" value="UniProtKB-KW"/>
</dbReference>
<dbReference type="GO" id="GO:0002940">
    <property type="term" value="P:tRNA N2-guanine methylation"/>
    <property type="evidence" value="ECO:0000318"/>
    <property type="project" value="GO_Central"/>
</dbReference>
<dbReference type="CDD" id="cd02440">
    <property type="entry name" value="AdoMet_MTases"/>
    <property type="match status" value="1"/>
</dbReference>
<dbReference type="FunFam" id="3.30.56.70:FF:000001">
    <property type="entry name" value="tRNA (guanine(26)-N(2))-dimethyltransferase"/>
    <property type="match status" value="1"/>
</dbReference>
<dbReference type="FunFam" id="3.40.50.150:FF:000272">
    <property type="entry name" value="tRNA (guanine(26)-N(2))-dimethyltransferase"/>
    <property type="match status" value="1"/>
</dbReference>
<dbReference type="Gene3D" id="3.30.56.70">
    <property type="entry name" value="N2,N2-dimethylguanosine tRNA methyltransferase, C-terminal domain"/>
    <property type="match status" value="1"/>
</dbReference>
<dbReference type="Gene3D" id="3.40.50.150">
    <property type="entry name" value="Vaccinia Virus protein VP39"/>
    <property type="match status" value="1"/>
</dbReference>
<dbReference type="HAMAP" id="MF_00290">
    <property type="entry name" value="tRNA_dimethyltr_TRM1"/>
    <property type="match status" value="1"/>
</dbReference>
<dbReference type="InterPro" id="IPR029063">
    <property type="entry name" value="SAM-dependent_MTases_sf"/>
</dbReference>
<dbReference type="InterPro" id="IPR002905">
    <property type="entry name" value="Trm1"/>
</dbReference>
<dbReference type="InterPro" id="IPR022923">
    <property type="entry name" value="TRM1_arc_bac"/>
</dbReference>
<dbReference type="InterPro" id="IPR042296">
    <property type="entry name" value="tRNA_met_Trm1_C"/>
</dbReference>
<dbReference type="NCBIfam" id="TIGR00308">
    <property type="entry name" value="TRM1"/>
    <property type="match status" value="1"/>
</dbReference>
<dbReference type="PANTHER" id="PTHR10631">
    <property type="entry name" value="N 2 ,N 2 -DIMETHYLGUANOSINE TRNA METHYLTRANSFERASE"/>
    <property type="match status" value="1"/>
</dbReference>
<dbReference type="PANTHER" id="PTHR10631:SF3">
    <property type="entry name" value="TRNA (GUANINE(26)-N(2))-DIMETHYLTRANSFERASE"/>
    <property type="match status" value="1"/>
</dbReference>
<dbReference type="Pfam" id="PF02005">
    <property type="entry name" value="TRM"/>
    <property type="match status" value="1"/>
</dbReference>
<dbReference type="SUPFAM" id="SSF53335">
    <property type="entry name" value="S-adenosyl-L-methionine-dependent methyltransferases"/>
    <property type="match status" value="1"/>
</dbReference>
<dbReference type="PROSITE" id="PS51626">
    <property type="entry name" value="SAM_MT_TRM1"/>
    <property type="match status" value="1"/>
</dbReference>
<name>TRM1_THEKO</name>
<organism>
    <name type="scientific">Thermococcus kodakarensis (strain ATCC BAA-918 / JCM 12380 / KOD1)</name>
    <name type="common">Pyrococcus kodakaraensis (strain KOD1)</name>
    <dbReference type="NCBI Taxonomy" id="69014"/>
    <lineage>
        <taxon>Archaea</taxon>
        <taxon>Methanobacteriati</taxon>
        <taxon>Methanobacteriota</taxon>
        <taxon>Thermococci</taxon>
        <taxon>Thermococcales</taxon>
        <taxon>Thermococcaceae</taxon>
        <taxon>Thermococcus</taxon>
    </lineage>
</organism>
<feature type="chain" id="PRO_0000147691" description="tRNA (guanine(26)-N(2))-dimethyltransferase">
    <location>
        <begin position="1"/>
        <end position="376"/>
    </location>
</feature>
<feature type="domain" description="Trm1 methyltransferase" evidence="1">
    <location>
        <begin position="4"/>
        <end position="373"/>
    </location>
</feature>
<feature type="binding site" evidence="1">
    <location>
        <position position="36"/>
    </location>
    <ligand>
        <name>S-adenosyl-L-methionine</name>
        <dbReference type="ChEBI" id="CHEBI:59789"/>
    </ligand>
</feature>
<feature type="binding site" evidence="1">
    <location>
        <position position="61"/>
    </location>
    <ligand>
        <name>S-adenosyl-L-methionine</name>
        <dbReference type="ChEBI" id="CHEBI:59789"/>
    </ligand>
</feature>
<feature type="binding site" evidence="1">
    <location>
        <position position="78"/>
    </location>
    <ligand>
        <name>S-adenosyl-L-methionine</name>
        <dbReference type="ChEBI" id="CHEBI:59789"/>
    </ligand>
</feature>
<feature type="binding site" evidence="1">
    <location>
        <position position="120"/>
    </location>
    <ligand>
        <name>S-adenosyl-L-methionine</name>
        <dbReference type="ChEBI" id="CHEBI:59789"/>
    </ligand>
</feature>
<feature type="binding site" evidence="1">
    <location>
        <position position="121"/>
    </location>
    <ligand>
        <name>S-adenosyl-L-methionine</name>
        <dbReference type="ChEBI" id="CHEBI:59789"/>
    </ligand>
</feature>
<sequence length="376" mass="42040">MELVAVKEGLARILVPKAERIYDAPVFYNPVMSLNRDISVLAVKVLGPKRVLDALSATGIRGIRYALETPAEEVWLNDISEEAYGLMKKNASLNIDGELYEEGDRSYLWGEKLVVINKGDANRLMAENFRYFDFLDLDPFGSPVEFLDTALRSVRRNGVLAVTATDTGVLCGAYRNACLRKYLAEPIRGPLCHEAGLRILIGTVVRYAAKYDLGVEVLLAYHRDHYFRAFLKLKSGAKKADKSLSQLGFLWADKSGRFEYRRGFLPDKPGASGPLWLGPLKDESFVEELLESARDHPLAHKKTLSFLQLISEELDVPFHYDTHTLARACSLTPPKLDVIIQRLRELGHSATKTHFSPTSVKTDAPFGVVAEVMKNV</sequence>
<accession>Q5JIB3</accession>
<evidence type="ECO:0000255" key="1">
    <source>
        <dbReference type="HAMAP-Rule" id="MF_00290"/>
    </source>
</evidence>